<name>PG170_MONPV</name>
<organism>
    <name type="scientific">Monkeypox virus</name>
    <dbReference type="NCBI Taxonomy" id="10244"/>
    <lineage>
        <taxon>Viruses</taxon>
        <taxon>Varidnaviria</taxon>
        <taxon>Bamfordvirae</taxon>
        <taxon>Nucleocytoviricota</taxon>
        <taxon>Pokkesviricetes</taxon>
        <taxon>Chitovirales</taxon>
        <taxon>Poxviridae</taxon>
        <taxon>Chordopoxvirinae</taxon>
        <taxon>Orthopoxvirus</taxon>
    </lineage>
</organism>
<proteinExistence type="evidence at protein level"/>
<evidence type="ECO:0000250" key="1">
    <source>
        <dbReference type="UniProtKB" id="P24766"/>
    </source>
</evidence>
<evidence type="ECO:0000255" key="2"/>
<evidence type="ECO:0000255" key="3">
    <source>
        <dbReference type="PROSITE-ProRule" id="PRU00498"/>
    </source>
</evidence>
<evidence type="ECO:0000305" key="4"/>
<evidence type="ECO:0007829" key="5">
    <source>
        <dbReference type="PDB" id="8JC6"/>
    </source>
</evidence>
<keyword id="KW-0002">3D-structure</keyword>
<keyword id="KW-0244">Early protein</keyword>
<keyword id="KW-0325">Glycoprotein</keyword>
<keyword id="KW-1185">Reference proteome</keyword>
<keyword id="KW-0964">Secreted</keyword>
<keyword id="KW-0732">Signal</keyword>
<reference key="1">
    <citation type="journal article" date="2022" name="J. Infect. Dis.">
        <title>Exportation of Monkeypox virus from the African continent.</title>
        <authorList>
            <person name="Mauldin M.R."/>
            <person name="McCollum A.M."/>
            <person name="Nakazawa Y.J."/>
            <person name="Mandra A."/>
            <person name="Whitehouse E.R."/>
            <person name="Davidson W."/>
            <person name="Zhao H."/>
            <person name="Gao J."/>
            <person name="Li Y."/>
            <person name="Doty J."/>
            <person name="Yinka-Ogunleye A."/>
            <person name="Akinpelu A."/>
            <person name="Aruna O."/>
            <person name="Naidoo D."/>
            <person name="Lewandowski K."/>
            <person name="Afrough B."/>
            <person name="Graham V."/>
            <person name="Aarons E."/>
            <person name="Hewson R."/>
            <person name="Vipond R."/>
            <person name="Dunning J."/>
            <person name="Chand M."/>
            <person name="Brown C."/>
            <person name="Cohen-Gihon I."/>
            <person name="Erez N."/>
            <person name="Shifman O."/>
            <person name="Israeli O."/>
            <person name="Sharon M."/>
            <person name="Schwartz E."/>
            <person name="Beth-Din A."/>
            <person name="Zvi A."/>
            <person name="Mak T.M."/>
            <person name="Ng Y.K."/>
            <person name="Cui L."/>
            <person name="Lin R.T.P."/>
            <person name="Olson V.A."/>
            <person name="Brooks T."/>
            <person name="Paran N."/>
            <person name="Ihekweazu C."/>
            <person name="Reynolds M.G."/>
        </authorList>
    </citation>
    <scope>NUCLEOTIDE SEQUENCE [LARGE SCALE GENOMIC DNA]</scope>
    <source>
        <strain>MPXV-M5312_HM12_Rivers</strain>
    </source>
</reference>
<comment type="function">
    <text evidence="1">May interact with several cellular chemokines to interfere with chemokine-glycosaminoglycan (GAG) interactions at the cell surface to alter chemotaxis of nearby responsive cells.</text>
</comment>
<comment type="subcellular location">
    <subcellularLocation>
        <location evidence="1">Secreted</location>
    </subcellularLocation>
</comment>
<comment type="induction">
    <text>Expressed in the early phase of the viral replicative cycle.</text>
</comment>
<comment type="similarity">
    <text evidence="4">Belongs to the orthopoxvirus OPG170 family.</text>
</comment>
<sequence>MYLLFIILMYLLPFSFQTSEPAYDKSVCDSGNKEYMGIEVYVEATLDEPLRQTTCESEIHKYGASVSNGGLNISVDLLNCFLNFHTVGVYTNRDTVYAKFASLDPWTTEPMNSMTHDDLVKLTEECIVDIYLKCEVDKTKDFMKTNDNRLKPRDFKTVPPSNVGSMIELQSDYCVNDVTAYVKIYDECGNIKQHSIPTLRDYFTTKNGQPRKILKKKIDNC</sequence>
<protein>
    <recommendedName>
        <fullName>Protein OPG170</fullName>
    </recommendedName>
</protein>
<organismHost>
    <name type="scientific">Cynomys gunnisoni</name>
    <name type="common">Gunnison's prairie dog</name>
    <name type="synonym">Spermophilus gunnisoni</name>
    <dbReference type="NCBI Taxonomy" id="45479"/>
</organismHost>
<organismHost>
    <name type="scientific">Cynomys leucurus</name>
    <name type="common">White-tailed prairie dog</name>
    <dbReference type="NCBI Taxonomy" id="99825"/>
</organismHost>
<organismHost>
    <name type="scientific">Cynomys ludovicianus</name>
    <name type="common">Black-tailed prairie dog</name>
    <dbReference type="NCBI Taxonomy" id="45480"/>
</organismHost>
<organismHost>
    <name type="scientific">Cynomys mexicanus</name>
    <name type="common">Mexican prairie dog</name>
    <dbReference type="NCBI Taxonomy" id="99826"/>
</organismHost>
<organismHost>
    <name type="scientific">Cynomys parvidens</name>
    <name type="common">Utah prairie dog</name>
    <dbReference type="NCBI Taxonomy" id="99827"/>
</organismHost>
<organismHost>
    <name type="scientific">Gliridae</name>
    <name type="common">dormice</name>
    <dbReference type="NCBI Taxonomy" id="30650"/>
</organismHost>
<organismHost>
    <name type="scientific">Heliosciurus ruwenzorii</name>
    <name type="common">Ruwenzori sun squirrel</name>
    <dbReference type="NCBI Taxonomy" id="226685"/>
</organismHost>
<organismHost>
    <name type="scientific">Homo sapiens</name>
    <name type="common">Human</name>
    <dbReference type="NCBI Taxonomy" id="9606"/>
</organismHost>
<organismHost>
    <name type="scientific">Mus musculus</name>
    <name type="common">Mouse</name>
    <dbReference type="NCBI Taxonomy" id="10090"/>
</organismHost>
<feature type="signal peptide" evidence="2">
    <location>
        <begin position="1"/>
        <end position="17"/>
    </location>
</feature>
<feature type="chain" id="PRO_0000457594" description="Protein OPG170" evidence="2">
    <location>
        <begin position="18"/>
        <end position="221"/>
    </location>
</feature>
<feature type="glycosylation site" description="N-linked (GlcNAc...) asparagine; by host" evidence="3">
    <location>
        <position position="72"/>
    </location>
</feature>
<feature type="strand" evidence="5">
    <location>
        <begin position="32"/>
        <end position="48"/>
    </location>
</feature>
<feature type="strand" evidence="5">
    <location>
        <begin position="56"/>
        <end position="60"/>
    </location>
</feature>
<feature type="strand" evidence="5">
    <location>
        <begin position="63"/>
        <end position="68"/>
    </location>
</feature>
<feature type="strand" evidence="5">
    <location>
        <begin position="71"/>
        <end position="79"/>
    </location>
</feature>
<feature type="strand" evidence="5">
    <location>
        <begin position="86"/>
        <end position="91"/>
    </location>
</feature>
<feature type="strand" evidence="5">
    <location>
        <begin position="93"/>
        <end position="101"/>
    </location>
</feature>
<feature type="turn" evidence="5">
    <location>
        <begin position="105"/>
        <end position="107"/>
    </location>
</feature>
<feature type="strand" evidence="5">
    <location>
        <begin position="108"/>
        <end position="110"/>
    </location>
</feature>
<feature type="helix" evidence="5">
    <location>
        <begin position="116"/>
        <end position="125"/>
    </location>
</feature>
<feature type="strand" evidence="5">
    <location>
        <begin position="127"/>
        <end position="134"/>
    </location>
</feature>
<feature type="helix" evidence="5">
    <location>
        <begin position="152"/>
        <end position="154"/>
    </location>
</feature>
<feature type="strand" evidence="5">
    <location>
        <begin position="155"/>
        <end position="157"/>
    </location>
</feature>
<feature type="strand" evidence="5">
    <location>
        <begin position="167"/>
        <end position="170"/>
    </location>
</feature>
<feature type="strand" evidence="5">
    <location>
        <begin position="175"/>
        <end position="186"/>
    </location>
</feature>
<feature type="turn" evidence="5">
    <location>
        <begin position="187"/>
        <end position="191"/>
    </location>
</feature>
<feature type="strand" evidence="5">
    <location>
        <begin position="192"/>
        <end position="194"/>
    </location>
</feature>
<feature type="strand" evidence="5">
    <location>
        <begin position="199"/>
        <end position="205"/>
    </location>
</feature>
<feature type="strand" evidence="5">
    <location>
        <begin position="212"/>
        <end position="214"/>
    </location>
</feature>
<dbReference type="EMBL" id="MT903340">
    <property type="protein sequence ID" value="QNP13021.1"/>
    <property type="molecule type" value="Genomic_DNA"/>
</dbReference>
<dbReference type="RefSeq" id="YP_010377148.1">
    <property type="nucleotide sequence ID" value="NC_063383.1"/>
</dbReference>
<dbReference type="PDB" id="8JC6">
    <property type="method" value="X-ray"/>
    <property type="resolution" value="1.92 A"/>
    <property type="chains" value="A=27-221"/>
</dbReference>
<dbReference type="PDBsum" id="8JC6"/>
<dbReference type="SMR" id="A0A7H0DND8"/>
<dbReference type="GeneID" id="72551562"/>
<dbReference type="Proteomes" id="UP000516359">
    <property type="component" value="Genome"/>
</dbReference>
<dbReference type="GO" id="GO:0005576">
    <property type="term" value="C:extracellular region"/>
    <property type="evidence" value="ECO:0007669"/>
    <property type="project" value="UniProtKB-SubCell"/>
</dbReference>
<dbReference type="Gene3D" id="2.60.240.10">
    <property type="entry name" value="Major secreted virus protein"/>
    <property type="match status" value="1"/>
</dbReference>
<dbReference type="InterPro" id="IPR003184">
    <property type="entry name" value="Orthopox_35kDa"/>
</dbReference>
<dbReference type="InterPro" id="IPR036540">
    <property type="entry name" value="Pox_vCCI-like_sf"/>
</dbReference>
<dbReference type="Pfam" id="PF02250">
    <property type="entry name" value="Orthopox_35kD"/>
    <property type="match status" value="1"/>
</dbReference>
<dbReference type="SUPFAM" id="SSF49889">
    <property type="entry name" value="Soluble secreted chemokine inhibitor, VCCI"/>
    <property type="match status" value="1"/>
</dbReference>
<gene>
    <name type="primary">OPG170</name>
    <name type="ORF">MPXVgp151</name>
</gene>
<accession>A0A7H0DND8</accession>